<proteinExistence type="evidence at protein level"/>
<feature type="chain" id="PRO_0000448066" description="Maleate isomerase">
    <location>
        <begin position="1"/>
        <end position="251"/>
    </location>
</feature>
<feature type="active site" description="Nucleophile" evidence="2">
    <location>
        <position position="76"/>
    </location>
</feature>
<feature type="active site" description="Proton donor" evidence="4">
    <location>
        <position position="194"/>
    </location>
</feature>
<feature type="binding site" evidence="2">
    <location>
        <position position="14"/>
    </location>
    <ligand>
        <name>substrate</name>
    </ligand>
</feature>
<feature type="binding site" evidence="2">
    <location>
        <begin position="76"/>
        <end position="78"/>
    </location>
    <ligand>
        <name>substrate</name>
    </ligand>
</feature>
<feature type="binding site" evidence="2">
    <location>
        <position position="133"/>
    </location>
    <ligand>
        <name>substrate</name>
    </ligand>
</feature>
<feature type="binding site" evidence="2">
    <location>
        <position position="163"/>
    </location>
    <ligand>
        <name>substrate</name>
    </ligand>
</feature>
<feature type="binding site" evidence="2">
    <location>
        <begin position="195"/>
        <end position="196"/>
    </location>
    <ligand>
        <name>substrate</name>
    </ligand>
</feature>
<feature type="modified residue" description="S-(2-succinyl)cysteine" evidence="2 7">
    <location>
        <position position="76"/>
    </location>
</feature>
<feature type="mutagenesis site" description="Reduces catalytic activity by more than 1000-fold. No change in substrate affinity." evidence="2">
    <original>C</original>
    <variation>S</variation>
    <location>
        <position position="76"/>
    </location>
</feature>
<feature type="mutagenesis site" description="No change in catalytic efficiency." evidence="2">
    <original>Y</original>
    <variation>F</variation>
    <location>
        <position position="133"/>
    </location>
</feature>
<feature type="mutagenesis site" description="Loss of catalytic activity." evidence="2">
    <original>C</original>
    <variation>A</variation>
    <location>
        <position position="194"/>
    </location>
</feature>
<feature type="mutagenesis site" description="Reduces catalytic activity by more than 1000-fold. No change in substrate affinity." evidence="2">
    <original>C</original>
    <variation>S</variation>
    <location>
        <position position="194"/>
    </location>
</feature>
<feature type="strand" evidence="9">
    <location>
        <begin position="2"/>
        <end position="11"/>
    </location>
</feature>
<feature type="helix" evidence="9">
    <location>
        <begin position="17"/>
        <end position="25"/>
    </location>
</feature>
<feature type="strand" evidence="9">
    <location>
        <begin position="33"/>
        <end position="40"/>
    </location>
</feature>
<feature type="helix" evidence="9">
    <location>
        <begin position="47"/>
        <end position="54"/>
    </location>
</feature>
<feature type="helix" evidence="9">
    <location>
        <begin position="57"/>
        <end position="65"/>
    </location>
</feature>
<feature type="strand" evidence="9">
    <location>
        <begin position="70"/>
        <end position="74"/>
    </location>
</feature>
<feature type="helix" evidence="9">
    <location>
        <begin position="77"/>
        <end position="81"/>
    </location>
</feature>
<feature type="helix" evidence="9">
    <location>
        <begin position="87"/>
        <end position="101"/>
    </location>
</feature>
<feature type="strand" evidence="9">
    <location>
        <begin position="107"/>
        <end position="110"/>
    </location>
</feature>
<feature type="helix" evidence="9">
    <location>
        <begin position="111"/>
        <end position="121"/>
    </location>
</feature>
<feature type="strand" evidence="9">
    <location>
        <begin position="126"/>
        <end position="131"/>
    </location>
</feature>
<feature type="helix" evidence="9">
    <location>
        <begin position="135"/>
        <end position="147"/>
    </location>
</feature>
<feature type="strand" evidence="9">
    <location>
        <begin position="151"/>
        <end position="157"/>
    </location>
</feature>
<feature type="helix" evidence="9">
    <location>
        <begin position="163"/>
        <end position="167"/>
    </location>
</feature>
<feature type="helix" evidence="9">
    <location>
        <begin position="171"/>
        <end position="180"/>
    </location>
</feature>
<feature type="strand" evidence="9">
    <location>
        <begin position="187"/>
        <end position="197"/>
    </location>
</feature>
<feature type="helix" evidence="9">
    <location>
        <begin position="202"/>
        <end position="210"/>
    </location>
</feature>
<feature type="strand" evidence="9">
    <location>
        <begin position="214"/>
        <end position="216"/>
    </location>
</feature>
<feature type="helix" evidence="9">
    <location>
        <begin position="217"/>
        <end position="228"/>
    </location>
</feature>
<feature type="strand" evidence="8">
    <location>
        <begin position="236"/>
        <end position="238"/>
    </location>
</feature>
<feature type="helix" evidence="9">
    <location>
        <begin position="240"/>
        <end position="243"/>
    </location>
</feature>
<feature type="turn" evidence="9">
    <location>
        <begin position="244"/>
        <end position="247"/>
    </location>
</feature>
<gene>
    <name evidence="1" type="primary">maiA</name>
    <name evidence="5" type="ordered locus">NFA_21930</name>
</gene>
<reference key="1">
    <citation type="journal article" date="2004" name="Proc. Natl. Acad. Sci. U.S.A.">
        <title>The complete genomic sequence of Nocardia farcinica IFM 10152.</title>
        <authorList>
            <person name="Ishikawa J."/>
            <person name="Yamashita A."/>
            <person name="Mikami Y."/>
            <person name="Hoshino Y."/>
            <person name="Kurita H."/>
            <person name="Hotta K."/>
            <person name="Shiba T."/>
            <person name="Hattori M."/>
        </authorList>
    </citation>
    <scope>NUCLEOTIDE SEQUENCE [LARGE SCALE GENOMIC DNA]</scope>
    <source>
        <strain>IFM 10152</strain>
    </source>
</reference>
<reference evidence="6 7" key="2">
    <citation type="journal article" date="2010" name="J. Am. Chem. Soc.">
        <title>A covalent succinylcysteine-like intermediate in the enzyme-catalyzed transformation of maleate to fumarate by maleate isomerase.</title>
        <authorList>
            <person name="Fisch F."/>
            <person name="Fleites C.M."/>
            <person name="Delenne M."/>
            <person name="Baudendistel N."/>
            <person name="Hauer B."/>
            <person name="Turkenburg J.P."/>
            <person name="Hart S."/>
            <person name="Bruce N.C."/>
            <person name="Grogan G."/>
        </authorList>
    </citation>
    <scope>X-RAY CRYSTALLOGRAPHY (1.95 ANGSTROMS) OF WILD-TYPE AND MUTANT ALA-194 WITH A COVALENTLY BOUND SUCCINYLCYSTEINE INTERMEDIATE</scope>
    <scope>FUNCTION</scope>
    <scope>CATALYTIC ACTIVITY</scope>
    <scope>BIOPHYSICOCHEMICAL PROPERTIES</scope>
    <scope>SUBSTRATE SPECIFICITY</scope>
    <scope>SUBUNIT</scope>
    <scope>REACTION MECHANISM</scope>
    <scope>ACTIVE SITE</scope>
    <scope>SUCCINATION AT CYS-76</scope>
    <scope>MUTAGENESIS OF CYS-76; TYR-133 AND CYS-194</scope>
    <source>
        <strain>IFM 10152</strain>
    </source>
</reference>
<accession>Q5YXQ1</accession>
<protein>
    <recommendedName>
        <fullName evidence="1 3">Maleate isomerase</fullName>
        <shortName evidence="3">MI</shortName>
        <ecNumber evidence="1 2">5.2.1.1</ecNumber>
    </recommendedName>
    <alternativeName>
        <fullName evidence="1">Maleate cis-trans isomerase</fullName>
    </alternativeName>
</protein>
<organism>
    <name type="scientific">Nocardia farcinica (strain IFM 10152)</name>
    <dbReference type="NCBI Taxonomy" id="247156"/>
    <lineage>
        <taxon>Bacteria</taxon>
        <taxon>Bacillati</taxon>
        <taxon>Actinomycetota</taxon>
        <taxon>Actinomycetes</taxon>
        <taxon>Mycobacteriales</taxon>
        <taxon>Nocardiaceae</taxon>
        <taxon>Nocardia</taxon>
    </lineage>
</organism>
<dbReference type="EC" id="5.2.1.1" evidence="1 2"/>
<dbReference type="EMBL" id="AP006618">
    <property type="protein sequence ID" value="BAD57040.1"/>
    <property type="molecule type" value="Genomic_DNA"/>
</dbReference>
<dbReference type="RefSeq" id="WP_011208725.1">
    <property type="nucleotide sequence ID" value="NC_006361.1"/>
</dbReference>
<dbReference type="PDB" id="2XEC">
    <property type="method" value="X-ray"/>
    <property type="resolution" value="2.20 A"/>
    <property type="chains" value="A/B/C/D=1-251"/>
</dbReference>
<dbReference type="PDB" id="2XED">
    <property type="method" value="X-ray"/>
    <property type="resolution" value="1.95 A"/>
    <property type="chains" value="A/B/C/D=1-251"/>
</dbReference>
<dbReference type="PDBsum" id="2XEC"/>
<dbReference type="PDBsum" id="2XED"/>
<dbReference type="SMR" id="Q5YXQ1"/>
<dbReference type="STRING" id="247156.NFA_21930"/>
<dbReference type="GeneID" id="61132954"/>
<dbReference type="KEGG" id="nfa:NFA_21930"/>
<dbReference type="eggNOG" id="COG3473">
    <property type="taxonomic scope" value="Bacteria"/>
</dbReference>
<dbReference type="HOGENOM" id="CLU_068086_0_0_11"/>
<dbReference type="OrthoDB" id="483160at2"/>
<dbReference type="BRENDA" id="5.2.1.1">
    <property type="organism ID" value="10091"/>
</dbReference>
<dbReference type="EvolutionaryTrace" id="Q5YXQ1"/>
<dbReference type="Proteomes" id="UP000006820">
    <property type="component" value="Chromosome"/>
</dbReference>
<dbReference type="GO" id="GO:0050076">
    <property type="term" value="F:maleate isomerase activity"/>
    <property type="evidence" value="ECO:0007669"/>
    <property type="project" value="UniProtKB-UniRule"/>
</dbReference>
<dbReference type="Gene3D" id="3.40.50.12500">
    <property type="match status" value="1"/>
</dbReference>
<dbReference type="HAMAP" id="MF_00943">
    <property type="entry name" value="Maleate_isomerase"/>
    <property type="match status" value="1"/>
</dbReference>
<dbReference type="InterPro" id="IPR053714">
    <property type="entry name" value="Iso_Racemase_Enz_sf"/>
</dbReference>
<dbReference type="InterPro" id="IPR026286">
    <property type="entry name" value="MaiA/AMDase"/>
</dbReference>
<dbReference type="InterPro" id="IPR028615">
    <property type="entry name" value="Maleate_isomerase"/>
</dbReference>
<dbReference type="PANTHER" id="PTHR40267">
    <property type="entry name" value="BLR3294 PROTEIN"/>
    <property type="match status" value="1"/>
</dbReference>
<dbReference type="PANTHER" id="PTHR40267:SF1">
    <property type="entry name" value="BLR3294 PROTEIN"/>
    <property type="match status" value="1"/>
</dbReference>
<dbReference type="Pfam" id="PF17645">
    <property type="entry name" value="Amdase"/>
    <property type="match status" value="1"/>
</dbReference>
<dbReference type="PIRSF" id="PIRSF015736">
    <property type="entry name" value="MI"/>
    <property type="match status" value="1"/>
</dbReference>
<evidence type="ECO:0000255" key="1">
    <source>
        <dbReference type="HAMAP-Rule" id="MF_00943"/>
    </source>
</evidence>
<evidence type="ECO:0000269" key="2">
    <source>
    </source>
</evidence>
<evidence type="ECO:0000303" key="3">
    <source>
    </source>
</evidence>
<evidence type="ECO:0000305" key="4">
    <source>
    </source>
</evidence>
<evidence type="ECO:0000312" key="5">
    <source>
        <dbReference type="EMBL" id="BAD57040.1"/>
    </source>
</evidence>
<evidence type="ECO:0007744" key="6">
    <source>
        <dbReference type="PDB" id="2XEC"/>
    </source>
</evidence>
<evidence type="ECO:0007744" key="7">
    <source>
        <dbReference type="PDB" id="2XED"/>
    </source>
</evidence>
<evidence type="ECO:0007829" key="8">
    <source>
        <dbReference type="PDB" id="2XEC"/>
    </source>
</evidence>
<evidence type="ECO:0007829" key="9">
    <source>
        <dbReference type="PDB" id="2XED"/>
    </source>
</evidence>
<keyword id="KW-0002">3D-structure</keyword>
<keyword id="KW-0413">Isomerase</keyword>
<keyword id="KW-1185">Reference proteome</keyword>
<sequence>MGIRRIGLVVPSSNVTVETEMPALLSRHPGAEFSFHSTRMRMHTVSPEGLAAMNAQRERCVLEIADAAPEVILYACLVAVMVGGPGEHHRVESAVAEQLATGGSQALVRSSAGALVEGLRALDAQRVALVTPYMRPLAEKVVAYLEAEGFTISDWRALEVADNTEVGCIPGEQVMAAARSLDLSEVDALVISCCVQMPSLPLVETAEREFGIPVLSAATAGAYSILRSLDLPVAVPGAGRLLRQDSAVTAS</sequence>
<name>MAIA_NOCFA</name>
<comment type="function">
    <text evidence="2">Catalyzes cis-trans isomerization of the C2-C3 double bond in maleate to yield fumarate. Shows a strict specificity for maleate, with no activity detected toward structurally related substrates including citraconate, mesaconate, dimethylmaleate, and maleamide.</text>
</comment>
<comment type="catalytic activity">
    <reaction evidence="2">
        <text>maleate = fumarate</text>
        <dbReference type="Rhea" id="RHEA:13169"/>
        <dbReference type="ChEBI" id="CHEBI:29806"/>
        <dbReference type="ChEBI" id="CHEBI:30780"/>
        <dbReference type="EC" id="5.2.1.1"/>
    </reaction>
</comment>
<comment type="biophysicochemical properties">
    <kinetics>
        <KM evidence="2">4.6 uM for maleate (at pH 7.5)</KM>
        <text evidence="2">kcat is 2.8 sec(-1).</text>
    </kinetics>
    <phDependence>
        <text evidence="2">Optimum pH is 7.5.</text>
    </phDependence>
</comment>
<comment type="subunit">
    <text evidence="2">Homodimer.</text>
</comment>
<comment type="miscellaneous">
    <text evidence="2">Reaction is initiated by nucleophilic attack of cysteine at the double bond, yielding a covalent succinylcysteine-like intermediate.</text>
</comment>
<comment type="similarity">
    <text evidence="1">Belongs to the maleate isomerase family.</text>
</comment>